<feature type="chain" id="PRO_0000202032" description="Putative magnesium transporter YhiD">
    <location>
        <begin position="1"/>
        <end position="215"/>
    </location>
</feature>
<feature type="transmembrane region" description="Helical" evidence="1">
    <location>
        <begin position="1"/>
        <end position="21"/>
    </location>
</feature>
<feature type="transmembrane region" description="Helical" evidence="1">
    <location>
        <begin position="36"/>
        <end position="56"/>
    </location>
</feature>
<feature type="transmembrane region" description="Helical" evidence="1">
    <location>
        <begin position="67"/>
        <end position="87"/>
    </location>
</feature>
<feature type="transmembrane region" description="Helical" evidence="1">
    <location>
        <begin position="92"/>
        <end position="112"/>
    </location>
</feature>
<feature type="transmembrane region" description="Helical" evidence="1">
    <location>
        <begin position="118"/>
        <end position="138"/>
    </location>
</feature>
<protein>
    <recommendedName>
        <fullName>Putative magnesium transporter YhiD</fullName>
    </recommendedName>
</protein>
<accession>P0AFV2</accession>
<accession>P26606</accession>
<accession>Q2M7H0</accession>
<evidence type="ECO:0000255" key="1"/>
<evidence type="ECO:0000269" key="2">
    <source>
    </source>
</evidence>
<evidence type="ECO:0000305" key="3"/>
<name>YHID_ECOLI</name>
<gene>
    <name type="primary">yhiD</name>
    <name type="synonym">yhhE</name>
    <name type="ordered locus">b3508</name>
    <name type="ordered locus">JW5670</name>
</gene>
<proteinExistence type="inferred from homology"/>
<reference key="1">
    <citation type="journal article" date="1994" name="Nucleic Acids Res.">
        <title>Analysis of the Escherichia coli genome. V. DNA sequence of the region from 76.0 to 81.5 minutes.</title>
        <authorList>
            <person name="Sofia H.J."/>
            <person name="Burland V."/>
            <person name="Daniels D.L."/>
            <person name="Plunkett G. III"/>
            <person name="Blattner F.R."/>
        </authorList>
    </citation>
    <scope>NUCLEOTIDE SEQUENCE [LARGE SCALE GENOMIC DNA]</scope>
    <source>
        <strain>K12 / MG1655 / ATCC 47076</strain>
    </source>
</reference>
<reference key="2">
    <citation type="journal article" date="1997" name="Science">
        <title>The complete genome sequence of Escherichia coli K-12.</title>
        <authorList>
            <person name="Blattner F.R."/>
            <person name="Plunkett G. III"/>
            <person name="Bloch C.A."/>
            <person name="Perna N.T."/>
            <person name="Burland V."/>
            <person name="Riley M."/>
            <person name="Collado-Vides J."/>
            <person name="Glasner J.D."/>
            <person name="Rode C.K."/>
            <person name="Mayhew G.F."/>
            <person name="Gregor J."/>
            <person name="Davis N.W."/>
            <person name="Kirkpatrick H.A."/>
            <person name="Goeden M.A."/>
            <person name="Rose D.J."/>
            <person name="Mau B."/>
            <person name="Shao Y."/>
        </authorList>
    </citation>
    <scope>NUCLEOTIDE SEQUENCE [LARGE SCALE GENOMIC DNA]</scope>
    <source>
        <strain>K12 / MG1655 / ATCC 47076</strain>
    </source>
</reference>
<reference key="3">
    <citation type="journal article" date="2006" name="Mol. Syst. Biol.">
        <title>Highly accurate genome sequences of Escherichia coli K-12 strains MG1655 and W3110.</title>
        <authorList>
            <person name="Hayashi K."/>
            <person name="Morooka N."/>
            <person name="Yamamoto Y."/>
            <person name="Fujita K."/>
            <person name="Isono K."/>
            <person name="Choi S."/>
            <person name="Ohtsubo E."/>
            <person name="Baba T."/>
            <person name="Wanner B.L."/>
            <person name="Mori H."/>
            <person name="Horiuchi T."/>
        </authorList>
    </citation>
    <scope>NUCLEOTIDE SEQUENCE [LARGE SCALE GENOMIC DNA]</scope>
    <source>
        <strain>K12 / W3110 / ATCC 27325 / DSM 5911</strain>
    </source>
</reference>
<reference key="4">
    <citation type="journal article" date="1993" name="Mol. Gen. Genet.">
        <title>Function of the Escherichia coli nucleoid protein, H-NS: molecular analysis of a subset of proteins whose expression is enhanced in a hns deletion mutant.</title>
        <authorList>
            <person name="Yoshida T."/>
            <person name="Ueguchi C."/>
            <person name="Yamada H."/>
            <person name="Mizuno T."/>
        </authorList>
    </citation>
    <scope>NUCLEOTIDE SEQUENCE [GENOMIC DNA] OF 1-148</scope>
    <source>
        <strain>K12</strain>
    </source>
</reference>
<reference key="5">
    <citation type="journal article" date="2009" name="EMBO J.">
        <title>Mg(2+)-dependent gating of bacterial MgtE channel underlies Mg(2+) homeostasis.</title>
        <authorList>
            <person name="Hattori M."/>
            <person name="Iwase N."/>
            <person name="Furuya N."/>
            <person name="Tanaka Y."/>
            <person name="Tsukazaki T."/>
            <person name="Ishitani R."/>
            <person name="Maguire M.E."/>
            <person name="Ito K."/>
            <person name="Maturana A."/>
            <person name="Nureki O."/>
        </authorList>
    </citation>
    <scope>FUNCTION</scope>
    <scope>DISRUPTION PHENOTYPE</scope>
</reference>
<keyword id="KW-0997">Cell inner membrane</keyword>
<keyword id="KW-1003">Cell membrane</keyword>
<keyword id="KW-0460">Magnesium</keyword>
<keyword id="KW-0472">Membrane</keyword>
<keyword id="KW-1185">Reference proteome</keyword>
<keyword id="KW-0812">Transmembrane</keyword>
<keyword id="KW-1133">Transmembrane helix</keyword>
<keyword id="KW-0813">Transport</keyword>
<comment type="function">
    <text evidence="2">Could be involved in magnesium uptake.</text>
</comment>
<comment type="subcellular location">
    <subcellularLocation>
        <location evidence="3">Cell inner membrane</location>
        <topology evidence="3">Multi-pass membrane protein</topology>
    </subcellularLocation>
</comment>
<comment type="disruption phenotype">
    <text evidence="2">Deletion of yhiD in addition to mgtA and corA leads to Mg(2+) auxotrophy.</text>
</comment>
<comment type="similarity">
    <text evidence="3">Belongs to the MgtC/SapB family.</text>
</comment>
<organism>
    <name type="scientific">Escherichia coli (strain K12)</name>
    <dbReference type="NCBI Taxonomy" id="83333"/>
    <lineage>
        <taxon>Bacteria</taxon>
        <taxon>Pseudomonadati</taxon>
        <taxon>Pseudomonadota</taxon>
        <taxon>Gammaproteobacteria</taxon>
        <taxon>Enterobacterales</taxon>
        <taxon>Enterobacteriaceae</taxon>
        <taxon>Escherichia</taxon>
    </lineage>
</organism>
<sequence length="215" mass="23213">MTAEFIIRLILAAIACGAIGMERQMRGKGAGLRTHVLIGMGSALFMIVSKYGFADVLSLDHVGLDPSRIAAQVVTGVGFIGAGNILVRNQNIVGLTTAADIWVTAAIGMVIGSGMYELGIYGSVMTLLVLEVFHQLTFRLMNKNYHLQLTLVNGNTVSMLDWFKQQKIKTDLVSLQENEDHEVVAIDIQLHATTSIEDLLRLLKGMAGVKGVSIS</sequence>
<dbReference type="EMBL" id="U00039">
    <property type="protein sequence ID" value="AAB18484.1"/>
    <property type="molecule type" value="Genomic_DNA"/>
</dbReference>
<dbReference type="EMBL" id="U00096">
    <property type="protein sequence ID" value="AAC76533.1"/>
    <property type="molecule type" value="Genomic_DNA"/>
</dbReference>
<dbReference type="EMBL" id="AP009048">
    <property type="protein sequence ID" value="BAE77786.1"/>
    <property type="molecule type" value="Genomic_DNA"/>
</dbReference>
<dbReference type="EMBL" id="D11109">
    <property type="protein sequence ID" value="BAA01885.1"/>
    <property type="molecule type" value="Genomic_DNA"/>
</dbReference>
<dbReference type="PIR" id="S47728">
    <property type="entry name" value="S47728"/>
</dbReference>
<dbReference type="RefSeq" id="NP_417965.1">
    <property type="nucleotide sequence ID" value="NC_000913.3"/>
</dbReference>
<dbReference type="RefSeq" id="WP_001296814.1">
    <property type="nucleotide sequence ID" value="NZ_STEB01000046.1"/>
</dbReference>
<dbReference type="SMR" id="P0AFV2"/>
<dbReference type="BioGRID" id="4261142">
    <property type="interactions" value="19"/>
</dbReference>
<dbReference type="FunCoup" id="P0AFV2">
    <property type="interactions" value="161"/>
</dbReference>
<dbReference type="STRING" id="511145.b3508"/>
<dbReference type="TCDB" id="9.B.20.1.4">
    <property type="family name" value="the putative mg(2+) transporter-c (mgtc) family"/>
</dbReference>
<dbReference type="jPOST" id="P0AFV2"/>
<dbReference type="PaxDb" id="511145-b3508"/>
<dbReference type="EnsemblBacteria" id="AAC76533">
    <property type="protein sequence ID" value="AAC76533"/>
    <property type="gene ID" value="b3508"/>
</dbReference>
<dbReference type="GeneID" id="948019"/>
<dbReference type="KEGG" id="ecj:JW5670"/>
<dbReference type="KEGG" id="eco:b3508"/>
<dbReference type="KEGG" id="ecoc:C3026_19005"/>
<dbReference type="PATRIC" id="fig|511145.12.peg.3615"/>
<dbReference type="EchoBASE" id="EB1372"/>
<dbReference type="eggNOG" id="COG1285">
    <property type="taxonomic scope" value="Bacteria"/>
</dbReference>
<dbReference type="HOGENOM" id="CLU_079292_0_1_6"/>
<dbReference type="InParanoid" id="P0AFV2"/>
<dbReference type="OMA" id="IMITSQY"/>
<dbReference type="OrthoDB" id="9811198at2"/>
<dbReference type="PhylomeDB" id="P0AFV2"/>
<dbReference type="BioCyc" id="EcoCyc:EG11400-MONOMER"/>
<dbReference type="PRO" id="PR:P0AFV2"/>
<dbReference type="Proteomes" id="UP000000625">
    <property type="component" value="Chromosome"/>
</dbReference>
<dbReference type="GO" id="GO:0005886">
    <property type="term" value="C:plasma membrane"/>
    <property type="evidence" value="ECO:0000314"/>
    <property type="project" value="EcoCyc"/>
</dbReference>
<dbReference type="InterPro" id="IPR003416">
    <property type="entry name" value="MgtC/SapB/SrpB/YhiD_fam"/>
</dbReference>
<dbReference type="InterPro" id="IPR049177">
    <property type="entry name" value="MgtC_SapB_SrpB_YhiD_N"/>
</dbReference>
<dbReference type="NCBIfam" id="NF007431">
    <property type="entry name" value="PRK09977.1"/>
    <property type="match status" value="1"/>
</dbReference>
<dbReference type="PANTHER" id="PTHR33778:SF1">
    <property type="entry name" value="MAGNESIUM TRANSPORTER YHID-RELATED"/>
    <property type="match status" value="1"/>
</dbReference>
<dbReference type="PANTHER" id="PTHR33778">
    <property type="entry name" value="PROTEIN MGTC"/>
    <property type="match status" value="1"/>
</dbReference>
<dbReference type="Pfam" id="PF02308">
    <property type="entry name" value="MgtC"/>
    <property type="match status" value="1"/>
</dbReference>
<dbReference type="PRINTS" id="PR01837">
    <property type="entry name" value="MGTCSAPBPROT"/>
</dbReference>